<evidence type="ECO:0000250" key="1">
    <source>
        <dbReference type="UniProtKB" id="P37834"/>
    </source>
</evidence>
<evidence type="ECO:0000250" key="2">
    <source>
        <dbReference type="UniProtKB" id="P84516"/>
    </source>
</evidence>
<evidence type="ECO:0000255" key="3">
    <source>
        <dbReference type="PROSITE-ProRule" id="PRU00297"/>
    </source>
</evidence>
<evidence type="ECO:0000305" key="4"/>
<reference evidence="4" key="1">
    <citation type="submission" date="2008-07" db="UniProtKB">
        <authorList>
            <person name="Almagro L."/>
            <person name="Calderon A.A."/>
            <person name="Pedreno M.A."/>
        </authorList>
    </citation>
    <scope>PROTEIN SEQUENCE</scope>
</reference>
<dbReference type="EC" id="1.11.1.7"/>
<dbReference type="InParanoid" id="P85998"/>
<dbReference type="Proteomes" id="UP000004994">
    <property type="component" value="Unplaced"/>
</dbReference>
<dbReference type="GO" id="GO:0005576">
    <property type="term" value="C:extracellular region"/>
    <property type="evidence" value="ECO:0007669"/>
    <property type="project" value="UniProtKB-SubCell"/>
</dbReference>
<dbReference type="GO" id="GO:0140825">
    <property type="term" value="F:lactoperoxidase activity"/>
    <property type="evidence" value="ECO:0007669"/>
    <property type="project" value="UniProtKB-EC"/>
</dbReference>
<dbReference type="GO" id="GO:0046872">
    <property type="term" value="F:metal ion binding"/>
    <property type="evidence" value="ECO:0007669"/>
    <property type="project" value="UniProtKB-KW"/>
</dbReference>
<dbReference type="GO" id="GO:0042744">
    <property type="term" value="P:hydrogen peroxide catabolic process"/>
    <property type="evidence" value="ECO:0007669"/>
    <property type="project" value="UniProtKB-KW"/>
</dbReference>
<proteinExistence type="evidence at protein level"/>
<sequence length="9" mass="1175">VHYHDCFVR</sequence>
<keyword id="KW-0106">Calcium</keyword>
<keyword id="KW-0903">Direct protein sequencing</keyword>
<keyword id="KW-0349">Heme</keyword>
<keyword id="KW-0376">Hydrogen peroxide</keyword>
<keyword id="KW-0408">Iron</keyword>
<keyword id="KW-0479">Metal-binding</keyword>
<keyword id="KW-0560">Oxidoreductase</keyword>
<keyword id="KW-0575">Peroxidase</keyword>
<keyword id="KW-1185">Reference proteome</keyword>
<keyword id="KW-0964">Secreted</keyword>
<feature type="chain" id="PRO_0000363742" description="Peroxidase 4">
    <location>
        <begin position="1" status="less than"/>
        <end position="9" status="greater than"/>
    </location>
</feature>
<feature type="unsure residue" description="F or M">
    <location>
        <position position="7"/>
    </location>
</feature>
<feature type="non-terminal residue">
    <location>
        <position position="1"/>
    </location>
</feature>
<feature type="non-terminal residue">
    <location>
        <position position="9"/>
    </location>
</feature>
<accession>P85998</accession>
<organism>
    <name type="scientific">Solanum lycopersicum</name>
    <name type="common">Tomato</name>
    <name type="synonym">Lycopersicon esculentum</name>
    <dbReference type="NCBI Taxonomy" id="4081"/>
    <lineage>
        <taxon>Eukaryota</taxon>
        <taxon>Viridiplantae</taxon>
        <taxon>Streptophyta</taxon>
        <taxon>Embryophyta</taxon>
        <taxon>Tracheophyta</taxon>
        <taxon>Spermatophyta</taxon>
        <taxon>Magnoliopsida</taxon>
        <taxon>eudicotyledons</taxon>
        <taxon>Gunneridae</taxon>
        <taxon>Pentapetalae</taxon>
        <taxon>asterids</taxon>
        <taxon>lamiids</taxon>
        <taxon>Solanales</taxon>
        <taxon>Solanaceae</taxon>
        <taxon>Solanoideae</taxon>
        <taxon>Solaneae</taxon>
        <taxon>Solanum</taxon>
        <taxon>Solanum subgen. Lycopersicon</taxon>
    </lineage>
</organism>
<protein>
    <recommendedName>
        <fullName evidence="1">Peroxidase 4</fullName>
        <ecNumber>1.11.1.7</ecNumber>
    </recommendedName>
</protein>
<comment type="function">
    <text evidence="4">Removal of H(2)O(2), oxidation of toxic reductants, biosynthesis and degradation of lignin, suberization, auxin catabolism, response to environmental stresses such as wounding, pathogen attack and oxidative stress. These functions might be dependent on each isozyme/isoform in each plant tissue.</text>
</comment>
<comment type="catalytic activity">
    <reaction>
        <text>2 a phenolic donor + H2O2 = 2 a phenolic radical donor + 2 H2O</text>
        <dbReference type="Rhea" id="RHEA:56136"/>
        <dbReference type="ChEBI" id="CHEBI:15377"/>
        <dbReference type="ChEBI" id="CHEBI:16240"/>
        <dbReference type="ChEBI" id="CHEBI:139520"/>
        <dbReference type="ChEBI" id="CHEBI:139521"/>
        <dbReference type="EC" id="1.11.1.7"/>
    </reaction>
</comment>
<comment type="cofactor">
    <cofactor evidence="1 3">
        <name>heme b</name>
        <dbReference type="ChEBI" id="CHEBI:60344"/>
    </cofactor>
    <text evidence="1 3">Binds 1 heme b (iron(II)-protoporphyrin IX) group per subunit.</text>
</comment>
<comment type="cofactor">
    <cofactor evidence="1 3">
        <name>Ca(2+)</name>
        <dbReference type="ChEBI" id="CHEBI:29108"/>
    </cofactor>
    <text evidence="1 3">Binds 2 calcium ions per subunit.</text>
</comment>
<comment type="subcellular location">
    <subcellularLocation>
        <location evidence="2 3">Secreted</location>
    </subcellularLocation>
</comment>
<comment type="similarity">
    <text evidence="3">Belongs to the peroxidase family. Classical plant (class III) peroxidase subfamily.</text>
</comment>
<name>PER4_SOLLC</name>